<protein>
    <recommendedName>
        <fullName evidence="5">FAD-dependent urate hydroxylase</fullName>
        <ecNumber evidence="2">1.14.13.113</ecNumber>
    </recommendedName>
    <alternativeName>
        <fullName evidence="3">Flavoprotein urate hydroxylase</fullName>
    </alternativeName>
</protein>
<accession>A1TFU9</accession>
<evidence type="ECO:0000250" key="1">
    <source>
        <dbReference type="UniProtKB" id="A6T923"/>
    </source>
</evidence>
<evidence type="ECO:0000269" key="2">
    <source>
    </source>
</evidence>
<evidence type="ECO:0000303" key="3">
    <source>
    </source>
</evidence>
<evidence type="ECO:0000305" key="4"/>
<evidence type="ECO:0000305" key="5">
    <source>
    </source>
</evidence>
<evidence type="ECO:0000312" key="6">
    <source>
        <dbReference type="EMBL" id="ABM16049.1"/>
    </source>
</evidence>
<organism>
    <name type="scientific">Mycolicibacterium vanbaalenii (strain DSM 7251 / JCM 13017 / BCRC 16820 / KCTC 9966 / NRRL B-24157 / PYR-1)</name>
    <name type="common">Mycobacterium vanbaalenii</name>
    <dbReference type="NCBI Taxonomy" id="350058"/>
    <lineage>
        <taxon>Bacteria</taxon>
        <taxon>Bacillati</taxon>
        <taxon>Actinomycetota</taxon>
        <taxon>Actinomycetes</taxon>
        <taxon>Mycobacteriales</taxon>
        <taxon>Mycobacteriaceae</taxon>
        <taxon>Mycolicibacterium</taxon>
    </lineage>
</organism>
<comment type="function">
    <text evidence="2">Catalyzes the hydroxylation of urate to 5-hydroxyisourate (HIU). Is likely to be involved in the urate degradation pathway to allantoin. Prefers NADH over NADPH as the electron donor.</text>
</comment>
<comment type="catalytic activity">
    <reaction evidence="2">
        <text>urate + NADH + O2 + H(+) = 5-hydroxyisourate + NAD(+) + H2O</text>
        <dbReference type="Rhea" id="RHEA:27329"/>
        <dbReference type="ChEBI" id="CHEBI:15377"/>
        <dbReference type="ChEBI" id="CHEBI:15378"/>
        <dbReference type="ChEBI" id="CHEBI:15379"/>
        <dbReference type="ChEBI" id="CHEBI:17775"/>
        <dbReference type="ChEBI" id="CHEBI:18072"/>
        <dbReference type="ChEBI" id="CHEBI:57540"/>
        <dbReference type="ChEBI" id="CHEBI:57945"/>
        <dbReference type="EC" id="1.14.13.113"/>
    </reaction>
</comment>
<comment type="cofactor">
    <cofactor evidence="2">
        <name>FAD</name>
        <dbReference type="ChEBI" id="CHEBI:57692"/>
    </cofactor>
</comment>
<comment type="biophysicochemical properties">
    <kinetics>
        <KM evidence="2">413 uM for urate</KM>
        <text evidence="2">kcat is 56.0 sec(-1) for the NADH-dependent oxidation of urate. Exhibits a Michaelian behavior only toward urate and a cooperative behavior toward NADH and NADPH.</text>
    </kinetics>
</comment>
<comment type="pathway">
    <text evidence="5">Purine metabolism; urate degradation.</text>
</comment>
<comment type="subunit">
    <text evidence="2">Monomer.</text>
</comment>
<comment type="similarity">
    <text evidence="4">Belongs to the FAD-dependent urate hydroxylase family.</text>
</comment>
<gene>
    <name evidence="3" type="primary">hpxO</name>
    <name evidence="6" type="ordered locus">Mvan_5278</name>
</gene>
<feature type="chain" id="PRO_0000435887" description="FAD-dependent urate hydroxylase">
    <location>
        <begin position="1"/>
        <end position="395"/>
    </location>
</feature>
<feature type="binding site" evidence="1">
    <location>
        <position position="11"/>
    </location>
    <ligand>
        <name>FAD</name>
        <dbReference type="ChEBI" id="CHEBI:57692"/>
    </ligand>
</feature>
<feature type="binding site" evidence="1">
    <location>
        <begin position="30"/>
        <end position="31"/>
    </location>
    <ligand>
        <name>FAD</name>
        <dbReference type="ChEBI" id="CHEBI:57692"/>
    </ligand>
</feature>
<feature type="binding site" evidence="1">
    <location>
        <position position="43"/>
    </location>
    <ligand>
        <name>FAD</name>
        <dbReference type="ChEBI" id="CHEBI:57692"/>
    </ligand>
</feature>
<feature type="binding site" evidence="1">
    <location>
        <position position="125"/>
    </location>
    <ligand>
        <name>FAD</name>
        <dbReference type="ChEBI" id="CHEBI:57692"/>
    </ligand>
</feature>
<feature type="binding site" evidence="1">
    <location>
        <position position="180"/>
    </location>
    <ligand>
        <name>substrate</name>
    </ligand>
</feature>
<feature type="binding site" evidence="1">
    <location>
        <position position="206"/>
    </location>
    <ligand>
        <name>substrate</name>
    </ligand>
</feature>
<feature type="binding site" evidence="1">
    <location>
        <begin position="218"/>
        <end position="220"/>
    </location>
    <ligand>
        <name>substrate</name>
    </ligand>
</feature>
<feature type="binding site" evidence="1">
    <location>
        <position position="287"/>
    </location>
    <ligand>
        <name>FAD</name>
        <dbReference type="ChEBI" id="CHEBI:57692"/>
    </ligand>
</feature>
<feature type="binding site" evidence="1">
    <location>
        <begin position="297"/>
        <end position="301"/>
    </location>
    <ligand>
        <name>FAD</name>
        <dbReference type="ChEBI" id="CHEBI:57692"/>
    </ligand>
</feature>
<feature type="site" description="Involved in substrate activation for the transfer of oxygen from the flavin hydroperoxide" evidence="1">
    <location>
        <position position="206"/>
    </location>
</feature>
<reference key="1">
    <citation type="submission" date="2006-12" db="EMBL/GenBank/DDBJ databases">
        <title>Complete sequence of Mycobacterium vanbaalenii PYR-1.</title>
        <authorList>
            <consortium name="US DOE Joint Genome Institute"/>
            <person name="Copeland A."/>
            <person name="Lucas S."/>
            <person name="Lapidus A."/>
            <person name="Barry K."/>
            <person name="Detter J.C."/>
            <person name="Glavina del Rio T."/>
            <person name="Hammon N."/>
            <person name="Israni S."/>
            <person name="Dalin E."/>
            <person name="Tice H."/>
            <person name="Pitluck S."/>
            <person name="Singan V."/>
            <person name="Schmutz J."/>
            <person name="Larimer F."/>
            <person name="Land M."/>
            <person name="Hauser L."/>
            <person name="Kyrpides N."/>
            <person name="Anderson I.J."/>
            <person name="Miller C."/>
            <person name="Richardson P."/>
        </authorList>
    </citation>
    <scope>NUCLEOTIDE SEQUENCE [LARGE SCALE GENOMIC DNA]</scope>
    <source>
        <strain>DSM 7251 / JCM 13017 / BCRC 16820 / KCTC 9966 / NRRL B-24157 / PYR-1</strain>
    </source>
</reference>
<reference key="2">
    <citation type="journal article" date="2012" name="Environ. Microbiol. Rep.">
        <title>Microbial urate catabolism: characterization of HpyO, a non-homologous isofunctional isoform of the flavoprotein urate hydroxylase HpxO.</title>
        <authorList>
            <person name="Michiel M."/>
            <person name="Perchat N."/>
            <person name="Perret A."/>
            <person name="Tricot S."/>
            <person name="Papeil A."/>
            <person name="Besnard M."/>
            <person name="de Berardinis V."/>
            <person name="Salanoubat M."/>
            <person name="Fischer C."/>
        </authorList>
    </citation>
    <scope>FUNCTION</scope>
    <scope>CATALYTIC ACTIVITY</scope>
    <scope>COFACTOR</scope>
    <scope>SUBSTRATE SPECIFICITY</scope>
    <scope>BIOPHYSICOCHEMICAL PROPERTIES</scope>
    <scope>SUBUNIT</scope>
    <scope>PATHWAY</scope>
</reference>
<proteinExistence type="evidence at protein level"/>
<sequence>MKVVIVGAGMGGMSAAIALRQIGIDTVVYERVTENKPVGAAISVWSNGVKCLNYLGLQEETAELGGKVETMSYVDGHTGDTMCRFSMHPLIEQVGQRPYPIARAELQLMLMKAYGIDDINFGMKMVGVENDTAGSAAKATFADGTTVSADVIIGADGAGSITREYVLGGPVSRRYAGYVNYNGLVSTDDAIGPATEWTTYVGDGKRVSVMPVSDDRFYFFFDVVEPQGSPYEEGRVREVLRAHFAGWTPGVQTLIDTLDPLATNRVEILDLDPFHTWVKGRVAVLGDAAHNTTPDIGQGGCSAMEDAIALQWAFKDHPDDVHAALAAYQSARTERAADLVLRARKRCDVTHAKDPQVTSRWYDELRNEDGTNIIRGIVGNIVGGPLTPVTAATEG</sequence>
<name>HPXO_MYCVP</name>
<dbReference type="EC" id="1.14.13.113" evidence="2"/>
<dbReference type="EMBL" id="CP000511">
    <property type="protein sequence ID" value="ABM16049.1"/>
    <property type="molecule type" value="Genomic_DNA"/>
</dbReference>
<dbReference type="RefSeq" id="WP_011782419.1">
    <property type="nucleotide sequence ID" value="NZ_JACKSD010000281.1"/>
</dbReference>
<dbReference type="SMR" id="A1TFU9"/>
<dbReference type="STRING" id="350058.Mvan_5278"/>
<dbReference type="KEGG" id="mva:Mvan_5278"/>
<dbReference type="eggNOG" id="COG0654">
    <property type="taxonomic scope" value="Bacteria"/>
</dbReference>
<dbReference type="HOGENOM" id="CLU_009665_19_5_11"/>
<dbReference type="UniPathway" id="UPA00394"/>
<dbReference type="Proteomes" id="UP000009159">
    <property type="component" value="Chromosome"/>
</dbReference>
<dbReference type="GO" id="GO:0071949">
    <property type="term" value="F:FAD binding"/>
    <property type="evidence" value="ECO:0000314"/>
    <property type="project" value="UniProtKB"/>
</dbReference>
<dbReference type="GO" id="GO:0102099">
    <property type="term" value="F:FAD-dependent urate hydroxylase activity"/>
    <property type="evidence" value="ECO:0007669"/>
    <property type="project" value="UniProtKB-EC"/>
</dbReference>
<dbReference type="GO" id="GO:0070404">
    <property type="term" value="F:NADH binding"/>
    <property type="evidence" value="ECO:0000314"/>
    <property type="project" value="UniProtKB"/>
</dbReference>
<dbReference type="GO" id="GO:0070402">
    <property type="term" value="F:NADPH binding"/>
    <property type="evidence" value="ECO:0000314"/>
    <property type="project" value="UniProtKB"/>
</dbReference>
<dbReference type="GO" id="GO:0016709">
    <property type="term" value="F:oxidoreductase activity, acting on paired donors, with incorporation or reduction of molecular oxygen, NAD(P)H as one donor, and incorporation of one atom of oxygen"/>
    <property type="evidence" value="ECO:0000314"/>
    <property type="project" value="UniProtKB"/>
</dbReference>
<dbReference type="GO" id="GO:0004846">
    <property type="term" value="F:urate oxidase activity"/>
    <property type="evidence" value="ECO:0007669"/>
    <property type="project" value="InterPro"/>
</dbReference>
<dbReference type="GO" id="GO:0006144">
    <property type="term" value="P:purine nucleobase metabolic process"/>
    <property type="evidence" value="ECO:0007669"/>
    <property type="project" value="UniProtKB-KW"/>
</dbReference>
<dbReference type="GO" id="GO:0019628">
    <property type="term" value="P:urate catabolic process"/>
    <property type="evidence" value="ECO:0000316"/>
    <property type="project" value="UniProtKB"/>
</dbReference>
<dbReference type="Gene3D" id="3.50.50.60">
    <property type="entry name" value="FAD/NAD(P)-binding domain"/>
    <property type="match status" value="1"/>
</dbReference>
<dbReference type="InterPro" id="IPR002938">
    <property type="entry name" value="FAD-bd"/>
</dbReference>
<dbReference type="InterPro" id="IPR050493">
    <property type="entry name" value="FAD-dep_Monooxygenase_BioMet"/>
</dbReference>
<dbReference type="InterPro" id="IPR036188">
    <property type="entry name" value="FAD/NAD-bd_sf"/>
</dbReference>
<dbReference type="InterPro" id="IPR047712">
    <property type="entry name" value="HpxO"/>
</dbReference>
<dbReference type="NCBIfam" id="NF033623">
    <property type="entry name" value="urate_HpxO"/>
    <property type="match status" value="1"/>
</dbReference>
<dbReference type="PANTHER" id="PTHR13789">
    <property type="entry name" value="MONOOXYGENASE"/>
    <property type="match status" value="1"/>
</dbReference>
<dbReference type="PANTHER" id="PTHR13789:SF309">
    <property type="entry name" value="PUTATIVE (AFU_ORTHOLOGUE AFUA_6G14510)-RELATED"/>
    <property type="match status" value="1"/>
</dbReference>
<dbReference type="Pfam" id="PF01494">
    <property type="entry name" value="FAD_binding_3"/>
    <property type="match status" value="1"/>
</dbReference>
<dbReference type="PRINTS" id="PR00420">
    <property type="entry name" value="RNGMNOXGNASE"/>
</dbReference>
<dbReference type="SUPFAM" id="SSF51905">
    <property type="entry name" value="FAD/NAD(P)-binding domain"/>
    <property type="match status" value="1"/>
</dbReference>
<keyword id="KW-0274">FAD</keyword>
<keyword id="KW-0285">Flavoprotein</keyword>
<keyword id="KW-0503">Monooxygenase</keyword>
<keyword id="KW-0520">NAD</keyword>
<keyword id="KW-0560">Oxidoreductase</keyword>
<keyword id="KW-0659">Purine metabolism</keyword>